<comment type="function">
    <text evidence="1">This is one of the proteins that bind and probably mediate the attachment of the 5S RNA into the large ribosomal subunit, where it forms part of the central protuberance.</text>
</comment>
<comment type="subunit">
    <text evidence="1">Part of the 50S ribosomal subunit; part of the 5S rRNA/L5/L18/L25 subcomplex. Contacts the 5S and 23S rRNAs.</text>
</comment>
<comment type="similarity">
    <text evidence="1">Belongs to the universal ribosomal protein uL18 family.</text>
</comment>
<keyword id="KW-0687">Ribonucleoprotein</keyword>
<keyword id="KW-0689">Ribosomal protein</keyword>
<keyword id="KW-0694">RNA-binding</keyword>
<keyword id="KW-0699">rRNA-binding</keyword>
<sequence length="118" mass="13267">MRANVLKRKLTLRIKRKKRIRAKISGCENFPRISVFKSNRTLYIQAIDDVKAVTLAAVDGRKLGVKANKEGAKKIAAEFAKTLKAKKIEQAVFDRNGYVYHGVIAVLAESLRENGIRL</sequence>
<dbReference type="EMBL" id="CP000768">
    <property type="protein sequence ID" value="ABS44319.1"/>
    <property type="molecule type" value="Genomic_DNA"/>
</dbReference>
<dbReference type="SMR" id="A7H640"/>
<dbReference type="KEGG" id="cjd:JJD26997_2065"/>
<dbReference type="HOGENOM" id="CLU_098841_0_1_7"/>
<dbReference type="Proteomes" id="UP000002302">
    <property type="component" value="Chromosome"/>
</dbReference>
<dbReference type="GO" id="GO:0022625">
    <property type="term" value="C:cytosolic large ribosomal subunit"/>
    <property type="evidence" value="ECO:0007669"/>
    <property type="project" value="TreeGrafter"/>
</dbReference>
<dbReference type="GO" id="GO:0008097">
    <property type="term" value="F:5S rRNA binding"/>
    <property type="evidence" value="ECO:0007669"/>
    <property type="project" value="TreeGrafter"/>
</dbReference>
<dbReference type="GO" id="GO:0003735">
    <property type="term" value="F:structural constituent of ribosome"/>
    <property type="evidence" value="ECO:0007669"/>
    <property type="project" value="InterPro"/>
</dbReference>
<dbReference type="GO" id="GO:0006412">
    <property type="term" value="P:translation"/>
    <property type="evidence" value="ECO:0007669"/>
    <property type="project" value="UniProtKB-UniRule"/>
</dbReference>
<dbReference type="CDD" id="cd00432">
    <property type="entry name" value="Ribosomal_L18_L5e"/>
    <property type="match status" value="1"/>
</dbReference>
<dbReference type="Gene3D" id="3.30.420.100">
    <property type="match status" value="1"/>
</dbReference>
<dbReference type="HAMAP" id="MF_01337_B">
    <property type="entry name" value="Ribosomal_uL18_B"/>
    <property type="match status" value="1"/>
</dbReference>
<dbReference type="InterPro" id="IPR004389">
    <property type="entry name" value="Ribosomal_uL18_bac-type"/>
</dbReference>
<dbReference type="InterPro" id="IPR005484">
    <property type="entry name" value="Ribosomal_uL18_bac/euk"/>
</dbReference>
<dbReference type="NCBIfam" id="TIGR00060">
    <property type="entry name" value="L18_bact"/>
    <property type="match status" value="1"/>
</dbReference>
<dbReference type="PANTHER" id="PTHR12899">
    <property type="entry name" value="39S RIBOSOMAL PROTEIN L18, MITOCHONDRIAL"/>
    <property type="match status" value="1"/>
</dbReference>
<dbReference type="PANTHER" id="PTHR12899:SF3">
    <property type="entry name" value="LARGE RIBOSOMAL SUBUNIT PROTEIN UL18M"/>
    <property type="match status" value="1"/>
</dbReference>
<dbReference type="Pfam" id="PF00861">
    <property type="entry name" value="Ribosomal_L18p"/>
    <property type="match status" value="1"/>
</dbReference>
<dbReference type="SUPFAM" id="SSF53137">
    <property type="entry name" value="Translational machinery components"/>
    <property type="match status" value="1"/>
</dbReference>
<feature type="chain" id="PRO_1000053008" description="Large ribosomal subunit protein uL18">
    <location>
        <begin position="1"/>
        <end position="118"/>
    </location>
</feature>
<reference key="1">
    <citation type="submission" date="2007-07" db="EMBL/GenBank/DDBJ databases">
        <title>Complete genome sequence of Campylobacter jejuni subsp doylei 269.97 isolated from human blood.</title>
        <authorList>
            <person name="Fouts D.E."/>
            <person name="Mongodin E.F."/>
            <person name="Puiu D."/>
            <person name="Sebastian Y."/>
            <person name="Miller W.G."/>
            <person name="Mandrell R.E."/>
            <person name="Lastovica A.J."/>
            <person name="Nelson K.E."/>
        </authorList>
    </citation>
    <scope>NUCLEOTIDE SEQUENCE [LARGE SCALE GENOMIC DNA]</scope>
    <source>
        <strain>ATCC BAA-1458 / RM4099 / 269.97</strain>
    </source>
</reference>
<accession>A7H640</accession>
<organism>
    <name type="scientific">Campylobacter jejuni subsp. doylei (strain ATCC BAA-1458 / RM4099 / 269.97)</name>
    <dbReference type="NCBI Taxonomy" id="360109"/>
    <lineage>
        <taxon>Bacteria</taxon>
        <taxon>Pseudomonadati</taxon>
        <taxon>Campylobacterota</taxon>
        <taxon>Epsilonproteobacteria</taxon>
        <taxon>Campylobacterales</taxon>
        <taxon>Campylobacteraceae</taxon>
        <taxon>Campylobacter</taxon>
    </lineage>
</organism>
<proteinExistence type="inferred from homology"/>
<protein>
    <recommendedName>
        <fullName evidence="1">Large ribosomal subunit protein uL18</fullName>
    </recommendedName>
    <alternativeName>
        <fullName evidence="2">50S ribosomal protein L18</fullName>
    </alternativeName>
</protein>
<gene>
    <name evidence="1" type="primary">rplR</name>
    <name type="ordered locus">JJD26997_2065</name>
</gene>
<name>RL18_CAMJD</name>
<evidence type="ECO:0000255" key="1">
    <source>
        <dbReference type="HAMAP-Rule" id="MF_01337"/>
    </source>
</evidence>
<evidence type="ECO:0000305" key="2"/>